<gene>
    <name evidence="10" type="primary">5MMP</name>
    <name evidence="12" type="ordered locus">At1g59970</name>
    <name evidence="13" type="ORF">T2K10.2</name>
</gene>
<accession>Q9ZUJ5</accession>
<protein>
    <recommendedName>
        <fullName evidence="10">Metalloendoproteinase 5-MMP</fullName>
        <shortName evidence="10">At5-MMP</shortName>
        <ecNumber evidence="11">3.4.24.-</ecNumber>
    </recommendedName>
</protein>
<comment type="function">
    <text evidence="2 9">Matrix metalloproteinases (MMPs) or matrixins may play a role in the degradation and remodeling of the extracellular matrix (ECM) during development or in response to stresses (By similarity). Active on Mca-KESAbuNLFVLKDpaR-NH(2) (QF75) and, to some extent, on McaPLGLDpaAR-NH(2) (QF24), myelin basic protein (MBP) and beta-casein (PubMed:24156403).</text>
</comment>
<comment type="cofactor">
    <cofactor evidence="1">
        <name>Zn(2+)</name>
        <dbReference type="ChEBI" id="CHEBI:29105"/>
    </cofactor>
    <text evidence="1">Binds 1 zinc ion per subunit.</text>
</comment>
<comment type="activity regulation">
    <text evidence="9">Repressed by acetohydroxamic acid (AHA).</text>
</comment>
<comment type="biophysicochemical properties">
    <phDependence>
        <text evidence="9">Optimum pH is 7-8.</text>
    </phDependence>
    <temperatureDependence>
        <text evidence="9">Optimum temperature is 35 degrees Celsius.</text>
    </temperatureDependence>
</comment>
<comment type="subcellular location">
    <subcellularLocation>
        <location evidence="4">Cell membrane</location>
        <topology evidence="4">Lipid-anchor</topology>
        <topology evidence="4">GPI-anchor</topology>
        <orientation evidence="11">Extracellular side</orientation>
    </subcellularLocation>
</comment>
<comment type="tissue specificity">
    <text evidence="8">Mostly expressed in leaves, roots and stems, and, to a lower extent, in flowers.</text>
</comment>
<comment type="domain">
    <text evidence="3">The conserved cysteine present in the cysteine-switch motif binds the catalytic zinc ion, thus inhibiting the enzyme. The dissociation of the cysteine from the zinc ion upon the activation-peptide release activates the enzyme.</text>
</comment>
<comment type="similarity">
    <text evidence="11">Belongs to the peptidase M10A family. Matrix metalloproteinases (MMPs) subfamily.</text>
</comment>
<keyword id="KW-1003">Cell membrane</keyword>
<keyword id="KW-0325">Glycoprotein</keyword>
<keyword id="KW-0336">GPI-anchor</keyword>
<keyword id="KW-0378">Hydrolase</keyword>
<keyword id="KW-0449">Lipoprotein</keyword>
<keyword id="KW-0472">Membrane</keyword>
<keyword id="KW-0479">Metal-binding</keyword>
<keyword id="KW-0482">Metalloprotease</keyword>
<keyword id="KW-0645">Protease</keyword>
<keyword id="KW-1185">Reference proteome</keyword>
<keyword id="KW-0732">Signal</keyword>
<keyword id="KW-0862">Zinc</keyword>
<keyword id="KW-0865">Zymogen</keyword>
<dbReference type="EC" id="3.4.24.-" evidence="11"/>
<dbReference type="EMBL" id="AC005966">
    <property type="protein sequence ID" value="AAD14473.1"/>
    <property type="molecule type" value="Genomic_DNA"/>
</dbReference>
<dbReference type="EMBL" id="CP002684">
    <property type="protein sequence ID" value="AEE33645.1"/>
    <property type="molecule type" value="Genomic_DNA"/>
</dbReference>
<dbReference type="EMBL" id="AK176709">
    <property type="protein sequence ID" value="BAD44472.1"/>
    <property type="molecule type" value="mRNA"/>
</dbReference>
<dbReference type="EMBL" id="BT025260">
    <property type="protein sequence ID" value="ABF19013.1"/>
    <property type="molecule type" value="mRNA"/>
</dbReference>
<dbReference type="RefSeq" id="NP_176205.1">
    <property type="nucleotide sequence ID" value="NM_104689.4"/>
</dbReference>
<dbReference type="SMR" id="Q9ZUJ5"/>
<dbReference type="FunCoup" id="Q9ZUJ5">
    <property type="interactions" value="40"/>
</dbReference>
<dbReference type="STRING" id="3702.Q9ZUJ5"/>
<dbReference type="MEROPS" id="M10.038"/>
<dbReference type="GlyCosmos" id="Q9ZUJ5">
    <property type="glycosylation" value="5 sites, No reported glycans"/>
</dbReference>
<dbReference type="GlyGen" id="Q9ZUJ5">
    <property type="glycosylation" value="5 sites"/>
</dbReference>
<dbReference type="PaxDb" id="3702-AT1G59970.1"/>
<dbReference type="ProteomicsDB" id="243308"/>
<dbReference type="EnsemblPlants" id="AT1G59970.1">
    <property type="protein sequence ID" value="AT1G59970.1"/>
    <property type="gene ID" value="AT1G59970"/>
</dbReference>
<dbReference type="GeneID" id="842291"/>
<dbReference type="Gramene" id="AT1G59970.1">
    <property type="protein sequence ID" value="AT1G59970.1"/>
    <property type="gene ID" value="AT1G59970"/>
</dbReference>
<dbReference type="KEGG" id="ath:AT1G59970"/>
<dbReference type="Araport" id="AT1G59970"/>
<dbReference type="TAIR" id="AT1G59970">
    <property type="gene designation" value="AT5-MMP"/>
</dbReference>
<dbReference type="eggNOG" id="KOG1565">
    <property type="taxonomic scope" value="Eukaryota"/>
</dbReference>
<dbReference type="HOGENOM" id="CLU_015489_4_0_1"/>
<dbReference type="InParanoid" id="Q9ZUJ5"/>
<dbReference type="OMA" id="CHIGENI"/>
<dbReference type="PhylomeDB" id="Q9ZUJ5"/>
<dbReference type="PRO" id="PR:Q9ZUJ5"/>
<dbReference type="Proteomes" id="UP000006548">
    <property type="component" value="Chromosome 1"/>
</dbReference>
<dbReference type="ExpressionAtlas" id="Q9ZUJ5">
    <property type="expression patterns" value="baseline and differential"/>
</dbReference>
<dbReference type="GO" id="GO:0031012">
    <property type="term" value="C:extracellular matrix"/>
    <property type="evidence" value="ECO:0007669"/>
    <property type="project" value="InterPro"/>
</dbReference>
<dbReference type="GO" id="GO:0005886">
    <property type="term" value="C:plasma membrane"/>
    <property type="evidence" value="ECO:0007669"/>
    <property type="project" value="UniProtKB-SubCell"/>
</dbReference>
<dbReference type="GO" id="GO:0098552">
    <property type="term" value="C:side of membrane"/>
    <property type="evidence" value="ECO:0007669"/>
    <property type="project" value="UniProtKB-KW"/>
</dbReference>
<dbReference type="GO" id="GO:0004222">
    <property type="term" value="F:metalloendopeptidase activity"/>
    <property type="evidence" value="ECO:0000314"/>
    <property type="project" value="UniProtKB"/>
</dbReference>
<dbReference type="GO" id="GO:0008270">
    <property type="term" value="F:zinc ion binding"/>
    <property type="evidence" value="ECO:0007669"/>
    <property type="project" value="InterPro"/>
</dbReference>
<dbReference type="GO" id="GO:0050832">
    <property type="term" value="P:defense response to fungus"/>
    <property type="evidence" value="ECO:0000315"/>
    <property type="project" value="TAIR"/>
</dbReference>
<dbReference type="GO" id="GO:0006508">
    <property type="term" value="P:proteolysis"/>
    <property type="evidence" value="ECO:0007669"/>
    <property type="project" value="UniProtKB-KW"/>
</dbReference>
<dbReference type="CDD" id="cd04278">
    <property type="entry name" value="ZnMc_MMP"/>
    <property type="match status" value="1"/>
</dbReference>
<dbReference type="FunFam" id="3.40.390.10:FF:000018">
    <property type="entry name" value="Metalloendoproteinase 1"/>
    <property type="match status" value="1"/>
</dbReference>
<dbReference type="Gene3D" id="3.40.390.10">
    <property type="entry name" value="Collagenase (Catalytic Domain)"/>
    <property type="match status" value="1"/>
</dbReference>
<dbReference type="InterPro" id="IPR033739">
    <property type="entry name" value="M10A_MMP"/>
</dbReference>
<dbReference type="InterPro" id="IPR024079">
    <property type="entry name" value="MetalloPept_cat_dom_sf"/>
</dbReference>
<dbReference type="InterPro" id="IPR001818">
    <property type="entry name" value="Pept_M10_metallopeptidase"/>
</dbReference>
<dbReference type="InterPro" id="IPR021190">
    <property type="entry name" value="Pept_M10A"/>
</dbReference>
<dbReference type="InterPro" id="IPR021158">
    <property type="entry name" value="Pept_M10A_Zn_BS"/>
</dbReference>
<dbReference type="InterPro" id="IPR006026">
    <property type="entry name" value="Peptidase_Metallo"/>
</dbReference>
<dbReference type="InterPro" id="IPR002477">
    <property type="entry name" value="Peptidoglycan-bd-like"/>
</dbReference>
<dbReference type="InterPro" id="IPR036365">
    <property type="entry name" value="PGBD-like_sf"/>
</dbReference>
<dbReference type="PANTHER" id="PTHR10201">
    <property type="entry name" value="MATRIX METALLOPROTEINASE"/>
    <property type="match status" value="1"/>
</dbReference>
<dbReference type="PANTHER" id="PTHR10201:SF272">
    <property type="entry name" value="METALLOENDOPROTEINASE 5-MMP"/>
    <property type="match status" value="1"/>
</dbReference>
<dbReference type="Pfam" id="PF00413">
    <property type="entry name" value="Peptidase_M10"/>
    <property type="match status" value="1"/>
</dbReference>
<dbReference type="Pfam" id="PF01471">
    <property type="entry name" value="PG_binding_1"/>
    <property type="match status" value="1"/>
</dbReference>
<dbReference type="PRINTS" id="PR00138">
    <property type="entry name" value="MATRIXIN"/>
</dbReference>
<dbReference type="SMART" id="SM00235">
    <property type="entry name" value="ZnMc"/>
    <property type="match status" value="1"/>
</dbReference>
<dbReference type="SUPFAM" id="SSF55486">
    <property type="entry name" value="Metalloproteases ('zincins'), catalytic domain"/>
    <property type="match status" value="1"/>
</dbReference>
<dbReference type="SUPFAM" id="SSF47090">
    <property type="entry name" value="PGBD-like"/>
    <property type="match status" value="1"/>
</dbReference>
<dbReference type="PROSITE" id="PS00546">
    <property type="entry name" value="CYSTEINE_SWITCH"/>
    <property type="match status" value="1"/>
</dbReference>
<dbReference type="PROSITE" id="PS00142">
    <property type="entry name" value="ZINC_PROTEASE"/>
    <property type="match status" value="1"/>
</dbReference>
<proteinExistence type="evidence at protein level"/>
<name>5MMP_ARATH</name>
<reference key="1">
    <citation type="journal article" date="2000" name="Nature">
        <title>Sequence and analysis of chromosome 1 of the plant Arabidopsis thaliana.</title>
        <authorList>
            <person name="Theologis A."/>
            <person name="Ecker J.R."/>
            <person name="Palm C.J."/>
            <person name="Federspiel N.A."/>
            <person name="Kaul S."/>
            <person name="White O."/>
            <person name="Alonso J."/>
            <person name="Altafi H."/>
            <person name="Araujo R."/>
            <person name="Bowman C.L."/>
            <person name="Brooks S.Y."/>
            <person name="Buehler E."/>
            <person name="Chan A."/>
            <person name="Chao Q."/>
            <person name="Chen H."/>
            <person name="Cheuk R.F."/>
            <person name="Chin C.W."/>
            <person name="Chung M.K."/>
            <person name="Conn L."/>
            <person name="Conway A.B."/>
            <person name="Conway A.R."/>
            <person name="Creasy T.H."/>
            <person name="Dewar K."/>
            <person name="Dunn P."/>
            <person name="Etgu P."/>
            <person name="Feldblyum T.V."/>
            <person name="Feng J.-D."/>
            <person name="Fong B."/>
            <person name="Fujii C.Y."/>
            <person name="Gill J.E."/>
            <person name="Goldsmith A.D."/>
            <person name="Haas B."/>
            <person name="Hansen N.F."/>
            <person name="Hughes B."/>
            <person name="Huizar L."/>
            <person name="Hunter J.L."/>
            <person name="Jenkins J."/>
            <person name="Johnson-Hopson C."/>
            <person name="Khan S."/>
            <person name="Khaykin E."/>
            <person name="Kim C.J."/>
            <person name="Koo H.L."/>
            <person name="Kremenetskaia I."/>
            <person name="Kurtz D.B."/>
            <person name="Kwan A."/>
            <person name="Lam B."/>
            <person name="Langin-Hooper S."/>
            <person name="Lee A."/>
            <person name="Lee J.M."/>
            <person name="Lenz C.A."/>
            <person name="Li J.H."/>
            <person name="Li Y.-P."/>
            <person name="Lin X."/>
            <person name="Liu S.X."/>
            <person name="Liu Z.A."/>
            <person name="Luros J.S."/>
            <person name="Maiti R."/>
            <person name="Marziali A."/>
            <person name="Militscher J."/>
            <person name="Miranda M."/>
            <person name="Nguyen M."/>
            <person name="Nierman W.C."/>
            <person name="Osborne B.I."/>
            <person name="Pai G."/>
            <person name="Peterson J."/>
            <person name="Pham P.K."/>
            <person name="Rizzo M."/>
            <person name="Rooney T."/>
            <person name="Rowley D."/>
            <person name="Sakano H."/>
            <person name="Salzberg S.L."/>
            <person name="Schwartz J.R."/>
            <person name="Shinn P."/>
            <person name="Southwick A.M."/>
            <person name="Sun H."/>
            <person name="Tallon L.J."/>
            <person name="Tambunga G."/>
            <person name="Toriumi M.J."/>
            <person name="Town C.D."/>
            <person name="Utterback T."/>
            <person name="Van Aken S."/>
            <person name="Vaysberg M."/>
            <person name="Vysotskaia V.S."/>
            <person name="Walker M."/>
            <person name="Wu D."/>
            <person name="Yu G."/>
            <person name="Fraser C.M."/>
            <person name="Venter J.C."/>
            <person name="Davis R.W."/>
        </authorList>
    </citation>
    <scope>NUCLEOTIDE SEQUENCE [LARGE SCALE GENOMIC DNA]</scope>
    <source>
        <strain>cv. Columbia</strain>
    </source>
</reference>
<reference key="2">
    <citation type="journal article" date="2017" name="Plant J.">
        <title>Araport11: a complete reannotation of the Arabidopsis thaliana reference genome.</title>
        <authorList>
            <person name="Cheng C.Y."/>
            <person name="Krishnakumar V."/>
            <person name="Chan A.P."/>
            <person name="Thibaud-Nissen F."/>
            <person name="Schobel S."/>
            <person name="Town C.D."/>
        </authorList>
    </citation>
    <scope>GENOME REANNOTATION</scope>
    <source>
        <strain>cv. Columbia</strain>
    </source>
</reference>
<reference key="3">
    <citation type="submission" date="2004-09" db="EMBL/GenBank/DDBJ databases">
        <title>Large-scale analysis of RIKEN Arabidopsis full-length (RAFL) cDNAs.</title>
        <authorList>
            <person name="Totoki Y."/>
            <person name="Seki M."/>
            <person name="Ishida J."/>
            <person name="Nakajima M."/>
            <person name="Enju A."/>
            <person name="Kamiya A."/>
            <person name="Narusaka M."/>
            <person name="Shin-i T."/>
            <person name="Nakagawa M."/>
            <person name="Sakamoto N."/>
            <person name="Oishi K."/>
            <person name="Kohara Y."/>
            <person name="Kobayashi M."/>
            <person name="Toyoda A."/>
            <person name="Sakaki Y."/>
            <person name="Sakurai T."/>
            <person name="Iida K."/>
            <person name="Akiyama K."/>
            <person name="Satou M."/>
            <person name="Toyoda T."/>
            <person name="Konagaya A."/>
            <person name="Carninci P."/>
            <person name="Kawai J."/>
            <person name="Hayashizaki Y."/>
            <person name="Shinozaki K."/>
        </authorList>
    </citation>
    <scope>NUCLEOTIDE SEQUENCE [LARGE SCALE MRNA]</scope>
    <source>
        <strain>cv. Columbia</strain>
    </source>
</reference>
<reference key="4">
    <citation type="submission" date="2006-04" db="EMBL/GenBank/DDBJ databases">
        <title>Arabidopsis ORF clones.</title>
        <authorList>
            <person name="Shinn P."/>
            <person name="Chen H."/>
            <person name="Kim C.J."/>
            <person name="Ecker J.R."/>
        </authorList>
    </citation>
    <scope>NUCLEOTIDE SEQUENCE [LARGE SCALE MRNA]</scope>
    <source>
        <strain>cv. Columbia</strain>
    </source>
</reference>
<reference key="5">
    <citation type="journal article" date="1999" name="J. Biol. Chem.">
        <title>Matrix metalloproteinase homologues from Arabidopsis thaliana. Expression and activity.</title>
        <authorList>
            <person name="Maidment J.M."/>
            <person name="Moore D."/>
            <person name="Murphy G.P."/>
            <person name="Murphy G."/>
            <person name="Clark I.M."/>
        </authorList>
    </citation>
    <scope>TISSUE SPECIFICITY</scope>
    <scope>GENE FAMILY</scope>
    <scope>NOMENCLATURE</scope>
</reference>
<reference key="6">
    <citation type="journal article" date="2014" name="Biochem. J.">
        <title>Family-wide characterization of matrix metalloproteinases from Arabidopsis thaliana reveals their distinct proteolytic activity and cleavage site specificity.</title>
        <authorList>
            <person name="Marino G."/>
            <person name="Huesgen P.F."/>
            <person name="Eckhard U."/>
            <person name="Overall C.M."/>
            <person name="Schroeder W.P."/>
            <person name="Funk C."/>
        </authorList>
    </citation>
    <scope>FUNCTION</scope>
    <scope>BIOPHYSICOCHEMICAL PROPERTIES</scope>
    <scope>ACTIVITY REGULATION</scope>
    <scope>GENE FAMILY</scope>
    <source>
        <strain>cv. Columbia</strain>
    </source>
</reference>
<evidence type="ECO:0000250" key="1"/>
<evidence type="ECO:0000250" key="2">
    <source>
        <dbReference type="UniProtKB" id="O23507"/>
    </source>
</evidence>
<evidence type="ECO:0000250" key="3">
    <source>
        <dbReference type="UniProtKB" id="P29136"/>
    </source>
</evidence>
<evidence type="ECO:0000255" key="4"/>
<evidence type="ECO:0000255" key="5">
    <source>
        <dbReference type="PROSITE-ProRule" id="PRU00498"/>
    </source>
</evidence>
<evidence type="ECO:0000255" key="6">
    <source>
        <dbReference type="PROSITE-ProRule" id="PRU10095"/>
    </source>
</evidence>
<evidence type="ECO:0000256" key="7">
    <source>
        <dbReference type="SAM" id="MobiDB-lite"/>
    </source>
</evidence>
<evidence type="ECO:0000269" key="8">
    <source>
    </source>
</evidence>
<evidence type="ECO:0000269" key="9">
    <source>
    </source>
</evidence>
<evidence type="ECO:0000303" key="10">
    <source>
    </source>
</evidence>
<evidence type="ECO:0000305" key="11"/>
<evidence type="ECO:0000312" key="12">
    <source>
        <dbReference type="Araport" id="AT1G59970"/>
    </source>
</evidence>
<evidence type="ECO:0000312" key="13">
    <source>
        <dbReference type="EMBL" id="AAD14473.1"/>
    </source>
</evidence>
<evidence type="ECO:0000312" key="14">
    <source>
        <dbReference type="Proteomes" id="UP000006548"/>
    </source>
</evidence>
<organism evidence="14">
    <name type="scientific">Arabidopsis thaliana</name>
    <name type="common">Mouse-ear cress</name>
    <dbReference type="NCBI Taxonomy" id="3702"/>
    <lineage>
        <taxon>Eukaryota</taxon>
        <taxon>Viridiplantae</taxon>
        <taxon>Streptophyta</taxon>
        <taxon>Embryophyta</taxon>
        <taxon>Tracheophyta</taxon>
        <taxon>Spermatophyta</taxon>
        <taxon>Magnoliopsida</taxon>
        <taxon>eudicotyledons</taxon>
        <taxon>Gunneridae</taxon>
        <taxon>Pentapetalae</taxon>
        <taxon>rosids</taxon>
        <taxon>malvids</taxon>
        <taxon>Brassicales</taxon>
        <taxon>Brassicaceae</taxon>
        <taxon>Camelineae</taxon>
        <taxon>Arabidopsis</taxon>
    </lineage>
</organism>
<sequence length="360" mass="39760">MRTLLLTILIFFFTVNPISAKFYTNVSSIPPLQFLNATQNAWETFSKLAGCHIGENINGLSKLKQYFRRFGYITTTGNCTDDFDDVLQSAINTYQKNFNLKVTGKLDSSTLRQIVKPRCGNPDLIDGVSEMNGGKILRTTEKYSFFPGKPRWPKRKRDLTYAFAPQNNLTDEVKRVFSRAFTRWAEVTPLNFTRSESILRADIVIGFFSGEHGDGEPFDGAMGTLAHASSPPTGMLHLDGDEDWLISNGEISRRILPVTTVVDLESVAVHEIGHLLGLGHSSVEDAIMFPAISGGDRKVELAKDDIEGIQHLYGGNPNGDGGGSKPSRESQSTGGDSVRRWRGWMISLSSIATCIFLISV</sequence>
<feature type="signal peptide" evidence="4">
    <location>
        <begin position="1"/>
        <end position="20"/>
    </location>
</feature>
<feature type="propeptide" id="PRO_0000433531" description="Activation peptide" evidence="3">
    <location>
        <begin position="21"/>
        <end position="142"/>
    </location>
</feature>
<feature type="chain" id="PRO_0000433532" description="Metalloendoproteinase 5-MMP" evidence="4">
    <location>
        <begin position="143"/>
        <end position="337"/>
    </location>
</feature>
<feature type="propeptide" id="PRO_0000433533" description="Removed in mature form" evidence="4">
    <location>
        <begin position="338"/>
        <end position="360"/>
    </location>
</feature>
<feature type="region of interest" description="Disordered" evidence="7">
    <location>
        <begin position="312"/>
        <end position="336"/>
    </location>
</feature>
<feature type="short sequence motif" description="Cysteine switch" evidence="1">
    <location>
        <begin position="117"/>
        <end position="124"/>
    </location>
</feature>
<feature type="active site" evidence="6">
    <location>
        <position position="271"/>
    </location>
</feature>
<feature type="binding site" description="in inhibited form" evidence="1">
    <location>
        <position position="119"/>
    </location>
    <ligand>
        <name>Zn(2+)</name>
        <dbReference type="ChEBI" id="CHEBI:29105"/>
        <note>catalytic</note>
    </ligand>
</feature>
<feature type="binding site" evidence="6">
    <location>
        <position position="270"/>
    </location>
    <ligand>
        <name>Zn(2+)</name>
        <dbReference type="ChEBI" id="CHEBI:29105"/>
        <note>catalytic</note>
    </ligand>
</feature>
<feature type="binding site" evidence="6">
    <location>
        <position position="274"/>
    </location>
    <ligand>
        <name>Zn(2+)</name>
        <dbReference type="ChEBI" id="CHEBI:29105"/>
        <note>catalytic</note>
    </ligand>
</feature>
<feature type="binding site" evidence="6">
    <location>
        <position position="280"/>
    </location>
    <ligand>
        <name>Zn(2+)</name>
        <dbReference type="ChEBI" id="CHEBI:29105"/>
        <note>catalytic</note>
    </ligand>
</feature>
<feature type="lipid moiety-binding region" description="GPI-anchor amidated serine" evidence="4">
    <location>
        <position position="337"/>
    </location>
</feature>
<feature type="glycosylation site" description="N-linked (GlcNAc...) asparagine" evidence="5">
    <location>
        <position position="25"/>
    </location>
</feature>
<feature type="glycosylation site" description="N-linked (GlcNAc...) asparagine" evidence="5">
    <location>
        <position position="36"/>
    </location>
</feature>
<feature type="glycosylation site" description="N-linked (GlcNAc...) asparagine" evidence="5">
    <location>
        <position position="78"/>
    </location>
</feature>
<feature type="glycosylation site" description="N-linked (GlcNAc...) asparagine" evidence="5">
    <location>
        <position position="168"/>
    </location>
</feature>
<feature type="glycosylation site" description="N-linked (GlcNAc...) asparagine" evidence="5">
    <location>
        <position position="191"/>
    </location>
</feature>